<feature type="chain" id="PRO_1000141627" description="Large ribosomal subunit protein uL2">
    <location>
        <begin position="1"/>
        <end position="275"/>
    </location>
</feature>
<feature type="region of interest" description="Disordered" evidence="2">
    <location>
        <begin position="1"/>
        <end position="24"/>
    </location>
</feature>
<feature type="region of interest" description="Disordered" evidence="2">
    <location>
        <begin position="208"/>
        <end position="275"/>
    </location>
</feature>
<feature type="compositionally biased region" description="Polar residues" evidence="2">
    <location>
        <begin position="12"/>
        <end position="22"/>
    </location>
</feature>
<feature type="compositionally biased region" description="Basic residues" evidence="2">
    <location>
        <begin position="208"/>
        <end position="219"/>
    </location>
</feature>
<feature type="compositionally biased region" description="Basic residues" evidence="2">
    <location>
        <begin position="255"/>
        <end position="275"/>
    </location>
</feature>
<evidence type="ECO:0000255" key="1">
    <source>
        <dbReference type="HAMAP-Rule" id="MF_01320"/>
    </source>
</evidence>
<evidence type="ECO:0000256" key="2">
    <source>
        <dbReference type="SAM" id="MobiDB-lite"/>
    </source>
</evidence>
<evidence type="ECO:0000305" key="3"/>
<organism>
    <name type="scientific">Picosynechococcus sp. (strain ATCC 27264 / PCC 7002 / PR-6)</name>
    <name type="common">Agmenellum quadruplicatum</name>
    <dbReference type="NCBI Taxonomy" id="32049"/>
    <lineage>
        <taxon>Bacteria</taxon>
        <taxon>Bacillati</taxon>
        <taxon>Cyanobacteriota</taxon>
        <taxon>Cyanophyceae</taxon>
        <taxon>Oscillatoriophycideae</taxon>
        <taxon>Chroococcales</taxon>
        <taxon>Geminocystaceae</taxon>
        <taxon>Picosynechococcus</taxon>
    </lineage>
</organism>
<comment type="function">
    <text evidence="1">One of the primary rRNA binding proteins. Required for association of the 30S and 50S subunits to form the 70S ribosome, for tRNA binding and peptide bond formation. It has been suggested to have peptidyltransferase activity; this is somewhat controversial. Makes several contacts with the 16S rRNA in the 70S ribosome.</text>
</comment>
<comment type="subunit">
    <text evidence="1">Part of the 50S ribosomal subunit. Forms a bridge to the 30S subunit in the 70S ribosome.</text>
</comment>
<comment type="similarity">
    <text evidence="1">Belongs to the universal ribosomal protein uL2 family.</text>
</comment>
<protein>
    <recommendedName>
        <fullName evidence="1">Large ribosomal subunit protein uL2</fullName>
    </recommendedName>
    <alternativeName>
        <fullName evidence="3">50S ribosomal protein L2</fullName>
    </alternativeName>
</protein>
<dbReference type="EMBL" id="CP000951">
    <property type="protein sequence ID" value="ACA99064.1"/>
    <property type="molecule type" value="Genomic_DNA"/>
</dbReference>
<dbReference type="RefSeq" id="WP_012306687.1">
    <property type="nucleotide sequence ID" value="NZ_JAHHPU010000001.1"/>
</dbReference>
<dbReference type="SMR" id="B1XJT6"/>
<dbReference type="STRING" id="32049.SYNPCC7002_A1062"/>
<dbReference type="KEGG" id="syp:SYNPCC7002_A1062"/>
<dbReference type="eggNOG" id="COG0090">
    <property type="taxonomic scope" value="Bacteria"/>
</dbReference>
<dbReference type="HOGENOM" id="CLU_036235_2_1_3"/>
<dbReference type="Proteomes" id="UP000001688">
    <property type="component" value="Chromosome"/>
</dbReference>
<dbReference type="GO" id="GO:0015934">
    <property type="term" value="C:large ribosomal subunit"/>
    <property type="evidence" value="ECO:0007669"/>
    <property type="project" value="InterPro"/>
</dbReference>
<dbReference type="GO" id="GO:0019843">
    <property type="term" value="F:rRNA binding"/>
    <property type="evidence" value="ECO:0007669"/>
    <property type="project" value="UniProtKB-UniRule"/>
</dbReference>
<dbReference type="GO" id="GO:0003735">
    <property type="term" value="F:structural constituent of ribosome"/>
    <property type="evidence" value="ECO:0007669"/>
    <property type="project" value="InterPro"/>
</dbReference>
<dbReference type="GO" id="GO:0016740">
    <property type="term" value="F:transferase activity"/>
    <property type="evidence" value="ECO:0007669"/>
    <property type="project" value="InterPro"/>
</dbReference>
<dbReference type="GO" id="GO:0006412">
    <property type="term" value="P:translation"/>
    <property type="evidence" value="ECO:0007669"/>
    <property type="project" value="UniProtKB-UniRule"/>
</dbReference>
<dbReference type="FunFam" id="2.30.30.30:FF:000001">
    <property type="entry name" value="50S ribosomal protein L2"/>
    <property type="match status" value="1"/>
</dbReference>
<dbReference type="FunFam" id="2.40.50.140:FF:000003">
    <property type="entry name" value="50S ribosomal protein L2"/>
    <property type="match status" value="1"/>
</dbReference>
<dbReference type="FunFam" id="4.10.950.10:FF:000001">
    <property type="entry name" value="50S ribosomal protein L2"/>
    <property type="match status" value="1"/>
</dbReference>
<dbReference type="Gene3D" id="2.30.30.30">
    <property type="match status" value="1"/>
</dbReference>
<dbReference type="Gene3D" id="2.40.50.140">
    <property type="entry name" value="Nucleic acid-binding proteins"/>
    <property type="match status" value="1"/>
</dbReference>
<dbReference type="Gene3D" id="4.10.950.10">
    <property type="entry name" value="Ribosomal protein L2, domain 3"/>
    <property type="match status" value="1"/>
</dbReference>
<dbReference type="HAMAP" id="MF_01320_B">
    <property type="entry name" value="Ribosomal_uL2_B"/>
    <property type="match status" value="1"/>
</dbReference>
<dbReference type="InterPro" id="IPR012340">
    <property type="entry name" value="NA-bd_OB-fold"/>
</dbReference>
<dbReference type="InterPro" id="IPR014722">
    <property type="entry name" value="Rib_uL2_dom2"/>
</dbReference>
<dbReference type="InterPro" id="IPR002171">
    <property type="entry name" value="Ribosomal_uL2"/>
</dbReference>
<dbReference type="InterPro" id="IPR005880">
    <property type="entry name" value="Ribosomal_uL2_bac/org-type"/>
</dbReference>
<dbReference type="InterPro" id="IPR022669">
    <property type="entry name" value="Ribosomal_uL2_C"/>
</dbReference>
<dbReference type="InterPro" id="IPR022671">
    <property type="entry name" value="Ribosomal_uL2_CS"/>
</dbReference>
<dbReference type="InterPro" id="IPR014726">
    <property type="entry name" value="Ribosomal_uL2_dom3"/>
</dbReference>
<dbReference type="InterPro" id="IPR022666">
    <property type="entry name" value="Ribosomal_uL2_RNA-bd_dom"/>
</dbReference>
<dbReference type="InterPro" id="IPR008991">
    <property type="entry name" value="Translation_prot_SH3-like_sf"/>
</dbReference>
<dbReference type="NCBIfam" id="TIGR01171">
    <property type="entry name" value="rplB_bact"/>
    <property type="match status" value="1"/>
</dbReference>
<dbReference type="PANTHER" id="PTHR13691:SF5">
    <property type="entry name" value="LARGE RIBOSOMAL SUBUNIT PROTEIN UL2M"/>
    <property type="match status" value="1"/>
</dbReference>
<dbReference type="PANTHER" id="PTHR13691">
    <property type="entry name" value="RIBOSOMAL PROTEIN L2"/>
    <property type="match status" value="1"/>
</dbReference>
<dbReference type="Pfam" id="PF00181">
    <property type="entry name" value="Ribosomal_L2"/>
    <property type="match status" value="1"/>
</dbReference>
<dbReference type="Pfam" id="PF03947">
    <property type="entry name" value="Ribosomal_L2_C"/>
    <property type="match status" value="1"/>
</dbReference>
<dbReference type="PIRSF" id="PIRSF002158">
    <property type="entry name" value="Ribosomal_L2"/>
    <property type="match status" value="1"/>
</dbReference>
<dbReference type="SMART" id="SM01383">
    <property type="entry name" value="Ribosomal_L2"/>
    <property type="match status" value="1"/>
</dbReference>
<dbReference type="SMART" id="SM01382">
    <property type="entry name" value="Ribosomal_L2_C"/>
    <property type="match status" value="1"/>
</dbReference>
<dbReference type="SUPFAM" id="SSF50249">
    <property type="entry name" value="Nucleic acid-binding proteins"/>
    <property type="match status" value="1"/>
</dbReference>
<dbReference type="SUPFAM" id="SSF50104">
    <property type="entry name" value="Translation proteins SH3-like domain"/>
    <property type="match status" value="1"/>
</dbReference>
<dbReference type="PROSITE" id="PS00467">
    <property type="entry name" value="RIBOSOMAL_L2"/>
    <property type="match status" value="1"/>
</dbReference>
<keyword id="KW-1185">Reference proteome</keyword>
<keyword id="KW-0687">Ribonucleoprotein</keyword>
<keyword id="KW-0689">Ribosomal protein</keyword>
<keyword id="KW-0694">RNA-binding</keyword>
<keyword id="KW-0699">rRNA-binding</keyword>
<accession>B1XJT6</accession>
<reference key="1">
    <citation type="submission" date="2008-02" db="EMBL/GenBank/DDBJ databases">
        <title>Complete sequence of Synechococcus sp. PCC 7002.</title>
        <authorList>
            <person name="Li T."/>
            <person name="Zhao J."/>
            <person name="Zhao C."/>
            <person name="Liu Z."/>
            <person name="Zhao F."/>
            <person name="Marquardt J."/>
            <person name="Nomura C.T."/>
            <person name="Persson S."/>
            <person name="Detter J.C."/>
            <person name="Richardson P.M."/>
            <person name="Lanz C."/>
            <person name="Schuster S.C."/>
            <person name="Wang J."/>
            <person name="Li S."/>
            <person name="Huang X."/>
            <person name="Cai T."/>
            <person name="Yu Z."/>
            <person name="Luo J."/>
            <person name="Zhao J."/>
            <person name="Bryant D.A."/>
        </authorList>
    </citation>
    <scope>NUCLEOTIDE SEQUENCE [LARGE SCALE GENOMIC DNA]</scope>
    <source>
        <strain>ATCC 27264 / PCC 7002 / PR-6</strain>
    </source>
</reference>
<name>RL2_PICP2</name>
<gene>
    <name evidence="1" type="primary">rplB</name>
    <name evidence="1" type="synonym">rpl2</name>
    <name type="ordered locus">SYNPCC7002_A1062</name>
</gene>
<sequence length="275" mass="30628">MGIRSFRPYTPGTRQATVSDFSEITKSKPEKSLTKYKHRKKGRNNRGVITCRHRGGGHKRLYRLIDFRRDKRDITAQVTAIEYDPNRNARIALVQYEDGEKRYILQPAGLGVGDTIIAGEEAPYEIGNALPLYKIPLGTEIHNIELYAGRGGQMVRSAGAFAQLVAKEGDYVTIKLPSKEVRMVRKECYATIGKVGNAEARNLKLGKAGRTRHLGRRPQVRGSVMNPVDHPHGGGEGRAPIGRSGPVTPWGKPALGKKTRKKKKQSSSLIVRRRR</sequence>
<proteinExistence type="inferred from homology"/>